<reference key="1">
    <citation type="journal article" date="1993" name="J. Bacteriol.">
        <title>Characterization of the ferrous iron uptake system of Escherichia coli.</title>
        <authorList>
            <person name="Kammler M."/>
            <person name="Schoen C."/>
            <person name="Hantke K."/>
        </authorList>
    </citation>
    <scope>NUCLEOTIDE SEQUENCE [GENOMIC DNA]</scope>
    <scope>FUNCTION</scope>
    <scope>DISRUPTION PHENOTYPE</scope>
    <source>
        <strain>K12 / MC4100</strain>
    </source>
</reference>
<reference key="2">
    <citation type="journal article" date="1997" name="Science">
        <title>The complete genome sequence of Escherichia coli K-12.</title>
        <authorList>
            <person name="Blattner F.R."/>
            <person name="Plunkett G. III"/>
            <person name="Bloch C.A."/>
            <person name="Perna N.T."/>
            <person name="Burland V."/>
            <person name="Riley M."/>
            <person name="Collado-Vides J."/>
            <person name="Glasner J.D."/>
            <person name="Rode C.K."/>
            <person name="Mayhew G.F."/>
            <person name="Gregor J."/>
            <person name="Davis N.W."/>
            <person name="Kirkpatrick H.A."/>
            <person name="Goeden M.A."/>
            <person name="Rose D.J."/>
            <person name="Mau B."/>
            <person name="Shao Y."/>
        </authorList>
    </citation>
    <scope>NUCLEOTIDE SEQUENCE [LARGE SCALE GENOMIC DNA]</scope>
    <source>
        <strain>K12 / MG1655 / ATCC 47076</strain>
    </source>
</reference>
<reference key="3">
    <citation type="journal article" date="2006" name="Mol. Syst. Biol.">
        <title>Highly accurate genome sequences of Escherichia coli K-12 strains MG1655 and W3110.</title>
        <authorList>
            <person name="Hayashi K."/>
            <person name="Morooka N."/>
            <person name="Yamamoto Y."/>
            <person name="Fujita K."/>
            <person name="Isono K."/>
            <person name="Choi S."/>
            <person name="Ohtsubo E."/>
            <person name="Baba T."/>
            <person name="Wanner B.L."/>
            <person name="Mori H."/>
            <person name="Horiuchi T."/>
        </authorList>
    </citation>
    <scope>NUCLEOTIDE SEQUENCE [LARGE SCALE GENOMIC DNA]</scope>
    <source>
        <strain>K12 / W3110 / ATCC 27325 / DSM 5911</strain>
    </source>
</reference>
<reference key="4">
    <citation type="journal article" date="2003" name="J. Mol. Evol.">
        <title>Rates of DNA sequence evolution in experimental populations of Escherichia coli during 20,000 generations.</title>
        <authorList>
            <person name="Lenski R.E."/>
            <person name="Winkworth C.L."/>
            <person name="Riley M.A."/>
        </authorList>
    </citation>
    <scope>NUCLEOTIDE SEQUENCE [GENOMIC DNA] OF 536-704</scope>
    <source>
        <strain>B / Bc251</strain>
    </source>
</reference>
<reference key="5">
    <citation type="journal article" date="2002" name="Proc. Natl. Acad. Sci. U.S.A.">
        <title>The membrane protein FeoB contains an intramolecular G protein essential for Fe(II) uptake in bacteria.</title>
        <authorList>
            <person name="Marlovits T.C."/>
            <person name="Haase W."/>
            <person name="Herrmann C."/>
            <person name="Aller S.G."/>
            <person name="Unger V.M."/>
        </authorList>
    </citation>
    <scope>FUNCTION</scope>
    <scope>GTP-BINDING SITES</scope>
    <scope>INDUCTION</scope>
    <scope>DOMAIN</scope>
    <scope>MUTAGENESIS OF ASP-94 AND ASP-123</scope>
</reference>
<reference key="6">
    <citation type="journal article" date="2005" name="Science">
        <title>Global topology analysis of the Escherichia coli inner membrane proteome.</title>
        <authorList>
            <person name="Daley D.O."/>
            <person name="Rapp M."/>
            <person name="Granseth E."/>
            <person name="Melen K."/>
            <person name="Drew D."/>
            <person name="von Heijne G."/>
        </authorList>
    </citation>
    <scope>SUBCELLULAR LOCATION</scope>
    <scope>TOPOLOGY [LARGE SCALE ANALYSIS]</scope>
    <source>
        <strain>K12 / MG1655 / ATCC 47076</strain>
    </source>
</reference>
<reference key="7">
    <citation type="journal article" date="2009" name="Mol. Cell">
        <title>Hydroxyurea induces hydroxyl radical-mediated cell death in Escherichia coli.</title>
        <authorList>
            <person name="Davies B.W."/>
            <person name="Kohanski M.A."/>
            <person name="Simmons L.A."/>
            <person name="Winkler J.A."/>
            <person name="Collins J.J."/>
            <person name="Walker G.C."/>
        </authorList>
    </citation>
    <scope>INDUCTION BY HYDROXYUREA</scope>
    <source>
        <strain>K12 / MC4100 / ATCC 35695 / DSM 6574</strain>
    </source>
</reference>
<reference key="8">
    <citation type="journal article" date="2013" name="J. Bacteriol.">
        <title>Solution structure of Escherichia coli FeoA and its potential role in bacterial ferrous iron transport.</title>
        <authorList>
            <person name="Lau C.K."/>
            <person name="Ishida H."/>
            <person name="Liu Z."/>
            <person name="Vogel H.J."/>
        </authorList>
    </citation>
    <scope>FUNCTION</scope>
    <scope>DOMAIN</scope>
    <source>
        <strain>K12</strain>
    </source>
</reference>
<reference evidence="15 16" key="9">
    <citation type="journal article" date="2009" name="EMBO J.">
        <title>Structural basis of GDP release and gating in G protein coupled Fe2+ transport.</title>
        <authorList>
            <person name="Guilfoyle A."/>
            <person name="Maher M.J."/>
            <person name="Rapp M."/>
            <person name="Clarke R."/>
            <person name="Harrop S."/>
            <person name="Jormakka M."/>
        </authorList>
    </citation>
    <scope>X-RAY CRYSTALLOGRAPHY (2.20 ANGSTROMS) OF 1-270 WITH AND WITHOUT GTP ANALOG</scope>
    <scope>FUNCTION</scope>
    <scope>SUBUNIT</scope>
    <scope>DOMAIN</scope>
    <scope>MUTAGENESIS OF SER-150 AND ARG-154</scope>
    <source>
        <strain>K12 / MG1655 / ATCC 47076</strain>
    </source>
</reference>
<reference evidence="17 18 19" key="10">
    <citation type="submission" date="2009-07" db="PDB data bank">
        <title>Structural basis for the intrinsic GTPase and GDI activities of FeoB, a prokaryotic transmembrane GTP/GDP-binding protein.</title>
        <authorList>
            <person name="Petermann N."/>
            <person name="Schmidt C.L."/>
            <person name="Hansen G."/>
            <person name="Wagner A.K."/>
            <person name="Hilgenfeld R."/>
            <person name="Hogg T."/>
        </authorList>
    </citation>
    <scope>X-RAY CRYSTALLOGRAPHY (1.80 ANGSTROMS) OF 1-274</scope>
    <scope>SUBUNIT</scope>
</reference>
<reference evidence="22" key="11">
    <citation type="journal article" date="2014" name="Biophys. J.">
        <title>A GTPase chimera illustrates an uncoupled nucleotide affinity and release rate, providing insight into the activation mechanism.</title>
        <authorList>
            <person name="Guilfoyle A.P."/>
            <person name="Deshpande C.N."/>
            <person name="Font Sadurni J."/>
            <person name="Ash M.R."/>
            <person name="Tourle S."/>
            <person name="Schenk G."/>
            <person name="Maher M.J."/>
            <person name="Jormakka M."/>
        </authorList>
    </citation>
    <scope>X-RAY CRYSTALLOGRAPHY (2.22 ANGSTROMS) OF HYBRID MUTANT 1-270</scope>
    <scope>FUNCTION</scope>
    <scope>MUTAGENESIS OF 150-SER--ALA-158</scope>
    <source>
        <strain>K12 / MG1655 / ATCC 47076</strain>
    </source>
</reference>
<reference evidence="20 21" key="12">
    <citation type="journal article" date="2014" name="Biosci. Rep.">
        <title>Exploring the correlation between the sequence composition of the nucleotide binding G5 loop of the FeoB GTPase domain (NFeoB) and intrinsic rate of GDP release.</title>
        <authorList>
            <person name="Guilfoyle A.P."/>
            <person name="Deshpande C.N."/>
            <person name="Schenk G."/>
            <person name="Maher M.J."/>
            <person name="Jormakka M."/>
        </authorList>
    </citation>
    <scope>X-RAY CRYSTALLOGRAPHY (2.10 ANGSTROMS) OF 1-261 MUTANT ALA-150</scope>
    <scope>X-RAY CRYSTALLOGRAPHY (2.80 ANGSTROMS) OF 1-261 MUTANT ALA-151</scope>
    <scope>FUNCTION</scope>
    <scope>SUBUNIT</scope>
    <scope>MUTAGENESIS OF SER-150; THR-151; ARG-152; GLY-153 AND ARG-154</scope>
</reference>
<organism>
    <name type="scientific">Escherichia coli (strain K12)</name>
    <dbReference type="NCBI Taxonomy" id="83333"/>
    <lineage>
        <taxon>Bacteria</taxon>
        <taxon>Pseudomonadati</taxon>
        <taxon>Pseudomonadota</taxon>
        <taxon>Gammaproteobacteria</taxon>
        <taxon>Enterobacterales</taxon>
        <taxon>Enterobacteriaceae</taxon>
        <taxon>Escherichia</taxon>
    </lineage>
</organism>
<sequence length="773" mass="84474">MKKLTIGLIGNPNSGKTTLFNQLTGSRQRVGNWAGVTVERKEGQFSTTDHQVTLVDLPGTYSLTTISSQTSLDEQIACHYILSGDADLLINVVDASNLERNLYLTLQLLELGIPCIVALNMLDIAEKQNIRIEIDALSARLGCPVIPLVSTRGRGIEALKLAIDRYKANENVELVHYAQPLLNEADSLAKVMPSDIPLKQRRWLGLQMLEGDIYSRAYAGEASQHLDAALARLRNEMDDPALHIADARYQCIAAICDVVSNTLTAEPSRFTTAVDKIVLNRFLGLPIFLFVMYLMFLLAINIGGALQPLFDVGSVALFVHGIQWIGYTLHFPDWLTIFLAQGLGGGINTVLPLVPQIGMMYLFLSFLEDSGYMARAAFVMDRLMQALGLPGKSFVPLIVGFGCNVPSVMGARTLDAPRERLMTIMMAPFMSCGARLAIFAVFAAAFFGQNGALAVFSLYMLGIVMAVLTGLMLKYTIMRGEATPFVMELPVYHVPHVKSLIIQTWQRLKGFVLRAGKVIIIVSIFLSAFNSFSLSGKIVDNINDSALASVSRVITPVFKPIGVHEDNWQATVGLFTGAMAKEVVVGTLNTLYTAENIQDEEFNPAEFNLGEELFSAIDETWQSLKDTFSLSVLMNPIEASKGDGEMGTGAMGVMDQKFGSAAAAYSYLIFVLLYVPCISVMGAIARESSRGWMGFSILWGLNIAYSLATLFYQVASYSQHPTYSLVCILAVILFNIVVIGLLRRARSRVDIELLATRKSVSSCCAASTTGDCH</sequence>
<evidence type="ECO:0000255" key="1"/>
<evidence type="ECO:0000255" key="2">
    <source>
        <dbReference type="PROSITE-ProRule" id="PRU01048"/>
    </source>
</evidence>
<evidence type="ECO:0000269" key="3">
    <source>
    </source>
</evidence>
<evidence type="ECO:0000269" key="4">
    <source>
    </source>
</evidence>
<evidence type="ECO:0000269" key="5">
    <source>
    </source>
</evidence>
<evidence type="ECO:0000269" key="6">
    <source>
    </source>
</evidence>
<evidence type="ECO:0000269" key="7">
    <source>
    </source>
</evidence>
<evidence type="ECO:0000269" key="8">
    <source>
    </source>
</evidence>
<evidence type="ECO:0000269" key="9">
    <source>
    </source>
</evidence>
<evidence type="ECO:0000269" key="10">
    <source>
    </source>
</evidence>
<evidence type="ECO:0000269" key="11">
    <source ref="10"/>
</evidence>
<evidence type="ECO:0000305" key="12"/>
<evidence type="ECO:0000305" key="13">
    <source>
    </source>
</evidence>
<evidence type="ECO:0000305" key="14">
    <source>
    </source>
</evidence>
<evidence type="ECO:0007744" key="15">
    <source>
        <dbReference type="PDB" id="3HYR"/>
    </source>
</evidence>
<evidence type="ECO:0007744" key="16">
    <source>
        <dbReference type="PDB" id="3HYT"/>
    </source>
</evidence>
<evidence type="ECO:0007744" key="17">
    <source>
        <dbReference type="PDB" id="3I8S"/>
    </source>
</evidence>
<evidence type="ECO:0007744" key="18">
    <source>
        <dbReference type="PDB" id="3I8X"/>
    </source>
</evidence>
<evidence type="ECO:0007744" key="19">
    <source>
        <dbReference type="PDB" id="3I92"/>
    </source>
</evidence>
<evidence type="ECO:0007744" key="20">
    <source>
        <dbReference type="PDB" id="4Q00"/>
    </source>
</evidence>
<evidence type="ECO:0007744" key="21">
    <source>
        <dbReference type="PDB" id="4Q5I"/>
    </source>
</evidence>
<evidence type="ECO:0007744" key="22">
    <source>
        <dbReference type="PDB" id="4R98"/>
    </source>
</evidence>
<evidence type="ECO:0007829" key="23">
    <source>
        <dbReference type="PDB" id="3I8S"/>
    </source>
</evidence>
<protein>
    <recommendedName>
        <fullName evidence="12">Fe(2+) transporter FeoB</fullName>
    </recommendedName>
    <alternativeName>
        <fullName>Ferrous iron transport protein B</fullName>
    </alternativeName>
</protein>
<keyword id="KW-0002">3D-structure</keyword>
<keyword id="KW-0997">Cell inner membrane</keyword>
<keyword id="KW-1003">Cell membrane</keyword>
<keyword id="KW-0342">GTP-binding</keyword>
<keyword id="KW-0406">Ion transport</keyword>
<keyword id="KW-0408">Iron</keyword>
<keyword id="KW-0410">Iron transport</keyword>
<keyword id="KW-0472">Membrane</keyword>
<keyword id="KW-0547">Nucleotide-binding</keyword>
<keyword id="KW-1185">Reference proteome</keyword>
<keyword id="KW-0812">Transmembrane</keyword>
<keyword id="KW-1133">Transmembrane helix</keyword>
<keyword id="KW-0813">Transport</keyword>
<feature type="chain" id="PRO_0000210821" description="Fe(2+) transporter FeoB">
    <location>
        <begin position="1"/>
        <end position="773"/>
    </location>
</feature>
<feature type="topological domain" description="Cytoplasmic" evidence="14">
    <location>
        <begin position="1"/>
        <end position="281"/>
    </location>
</feature>
<feature type="transmembrane region" description="Helical" evidence="1">
    <location>
        <begin position="282"/>
        <end position="302"/>
    </location>
</feature>
<feature type="topological domain" description="Periplasmic" evidence="12">
    <location>
        <begin position="303"/>
        <end position="308"/>
    </location>
</feature>
<feature type="transmembrane region" description="Helical" evidence="1">
    <location>
        <begin position="309"/>
        <end position="329"/>
    </location>
</feature>
<feature type="topological domain" description="Cytoplasmic" evidence="12">
    <location>
        <begin position="330"/>
        <end position="343"/>
    </location>
</feature>
<feature type="transmembrane region" description="Helical" evidence="1">
    <location>
        <begin position="344"/>
        <end position="366"/>
    </location>
</feature>
<feature type="topological domain" description="Periplasmic" evidence="12">
    <location>
        <begin position="367"/>
        <end position="382"/>
    </location>
</feature>
<feature type="transmembrane region" description="Helical" evidence="1">
    <location>
        <begin position="383"/>
        <end position="403"/>
    </location>
</feature>
<feature type="topological domain" description="Cytoplasmic" evidence="12">
    <location>
        <begin position="404"/>
        <end position="426"/>
    </location>
</feature>
<feature type="transmembrane region" description="Helical" evidence="1">
    <location>
        <begin position="427"/>
        <end position="447"/>
    </location>
</feature>
<feature type="topological domain" description="Periplasmic" evidence="12">
    <location>
        <begin position="448"/>
        <end position="452"/>
    </location>
</feature>
<feature type="transmembrane region" description="Helical" evidence="1">
    <location>
        <begin position="453"/>
        <end position="473"/>
    </location>
</feature>
<feature type="topological domain" description="Cytoplasmic" evidence="12">
    <location>
        <begin position="474"/>
        <end position="517"/>
    </location>
</feature>
<feature type="transmembrane region" description="Helical" evidence="1">
    <location>
        <begin position="518"/>
        <end position="538"/>
    </location>
</feature>
<feature type="topological domain" description="Periplasmic" evidence="12">
    <location>
        <begin position="539"/>
        <end position="663"/>
    </location>
</feature>
<feature type="transmembrane region" description="Helical" evidence="1">
    <location>
        <begin position="664"/>
        <end position="684"/>
    </location>
</feature>
<feature type="topological domain" description="Cytoplasmic" evidence="12">
    <location>
        <begin position="685"/>
        <end position="690"/>
    </location>
</feature>
<feature type="transmembrane region" description="Helical" evidence="1">
    <location>
        <begin position="691"/>
        <end position="711"/>
    </location>
</feature>
<feature type="topological domain" description="Periplasmic" evidence="12">
    <location>
        <begin position="712"/>
        <end position="721"/>
    </location>
</feature>
<feature type="transmembrane region" description="Helical" evidence="1">
    <location>
        <begin position="722"/>
        <end position="742"/>
    </location>
</feature>
<feature type="topological domain" description="Cytoplasmic" evidence="4">
    <location>
        <begin position="743"/>
        <end position="773"/>
    </location>
</feature>
<feature type="domain" description="FeoB-type G" evidence="2">
    <location>
        <begin position="3"/>
        <end position="169"/>
    </location>
</feature>
<feature type="region of interest" description="NFeoB, GTPase protein domain, binds GTP but not ATP" evidence="3 5 7 8 9">
    <location>
        <begin position="1"/>
        <end position="274"/>
    </location>
</feature>
<feature type="binding site" evidence="2 5">
    <location>
        <begin position="10"/>
        <end position="17"/>
    </location>
    <ligand>
        <name>GTP</name>
        <dbReference type="ChEBI" id="CHEBI:37565"/>
        <label>1</label>
    </ligand>
</feature>
<feature type="binding site" evidence="2">
    <location>
        <begin position="35"/>
        <end position="39"/>
    </location>
    <ligand>
        <name>GTP</name>
        <dbReference type="ChEBI" id="CHEBI:37565"/>
        <label>2</label>
    </ligand>
</feature>
<feature type="binding site" evidence="2">
    <location>
        <begin position="56"/>
        <end position="59"/>
    </location>
    <ligand>
        <name>GTP</name>
        <dbReference type="ChEBI" id="CHEBI:37565"/>
        <label>3</label>
    </ligand>
</feature>
<feature type="binding site" evidence="2 5 13">
    <location>
        <begin position="120"/>
        <end position="123"/>
    </location>
    <ligand>
        <name>GTP</name>
        <dbReference type="ChEBI" id="CHEBI:37565"/>
    </ligand>
</feature>
<feature type="binding site" evidence="2 5 8 12">
    <location>
        <begin position="149"/>
        <end position="151"/>
    </location>
    <ligand>
        <name>GTP</name>
        <dbReference type="ChEBI" id="CHEBI:37565"/>
    </ligand>
</feature>
<feature type="mutagenesis site" description="No effect." evidence="3">
    <original>D</original>
    <variation>N</variation>
    <location>
        <position position="94"/>
    </location>
</feature>
<feature type="mutagenesis site" description="Loss of guanine nucleotide-binding specificity and Fe(2+) uptake." evidence="3">
    <original>D</original>
    <variation>N</variation>
    <location>
        <position position="123"/>
    </location>
</feature>
<feature type="mutagenesis site" description="10-fold reduced affinity for GDP, corresponds to the G5 loop of human GNAI1, a slow GDP-releasing protein, in construct of residues 1-270." evidence="9">
    <original>STRGRGIEA</original>
    <variation>ATDTKNVQFV</variation>
    <location>
        <begin position="150"/>
        <end position="158"/>
    </location>
</feature>
<feature type="mutagenesis site" description="Dramatically reduced GDP release-rate, 5-fold increase in affinity for GDP, in construct of residues 1-270. GTP hydrolysis rate 1.5-fold higher than wild-type." evidence="5 8">
    <original>S</original>
    <variation>A</variation>
    <location>
        <position position="150"/>
    </location>
</feature>
<feature type="mutagenesis site" description="GTP hydrolysis rate 4-fold slower than wild-type, releases GDP very quickly." evidence="8">
    <original>T</original>
    <variation>A</variation>
    <location>
        <position position="151"/>
    </location>
</feature>
<feature type="mutagenesis site" description="GTP hydrolysis rate 1.3-fold slower than wild-type." evidence="8">
    <original>R</original>
    <variation>A</variation>
    <location>
        <position position="152"/>
    </location>
</feature>
<feature type="mutagenesis site" description="GTP hydrolysis rate 1.8-fold slower than wild-type." evidence="8">
    <original>G</original>
    <variation>A</variation>
    <location>
        <position position="153"/>
    </location>
</feature>
<feature type="mutagenesis site" description="Dramatically reduced GDP release-rate, in construct of residues 1-270. GTP hydrolysis rate 2.7-fold slower than wild-type." evidence="5 8">
    <original>R</original>
    <variation>A</variation>
    <location>
        <position position="154"/>
    </location>
</feature>
<feature type="strand" evidence="23">
    <location>
        <begin position="4"/>
        <end position="10"/>
    </location>
</feature>
<feature type="helix" evidence="23">
    <location>
        <begin position="16"/>
        <end position="24"/>
    </location>
</feature>
<feature type="strand" evidence="23">
    <location>
        <begin position="28"/>
        <end position="32"/>
    </location>
</feature>
<feature type="strand" evidence="23">
    <location>
        <begin position="36"/>
        <end position="46"/>
    </location>
</feature>
<feature type="strand" evidence="23">
    <location>
        <begin position="51"/>
        <end position="56"/>
    </location>
</feature>
<feature type="strand" evidence="23">
    <location>
        <begin position="66"/>
        <end position="68"/>
    </location>
</feature>
<feature type="helix" evidence="23">
    <location>
        <begin position="72"/>
        <end position="83"/>
    </location>
</feature>
<feature type="strand" evidence="23">
    <location>
        <begin position="87"/>
        <end position="94"/>
    </location>
</feature>
<feature type="helix" evidence="23">
    <location>
        <begin position="95"/>
        <end position="97"/>
    </location>
</feature>
<feature type="helix" evidence="23">
    <location>
        <begin position="98"/>
        <end position="111"/>
    </location>
</feature>
<feature type="strand" evidence="23">
    <location>
        <begin position="115"/>
        <end position="120"/>
    </location>
</feature>
<feature type="helix" evidence="23">
    <location>
        <begin position="122"/>
        <end position="127"/>
    </location>
</feature>
<feature type="strand" evidence="23">
    <location>
        <begin position="130"/>
        <end position="132"/>
    </location>
</feature>
<feature type="helix" evidence="23">
    <location>
        <begin position="134"/>
        <end position="141"/>
    </location>
</feature>
<feature type="strand" evidence="23">
    <location>
        <begin position="145"/>
        <end position="147"/>
    </location>
</feature>
<feature type="helix" evidence="23">
    <location>
        <begin position="151"/>
        <end position="153"/>
    </location>
</feature>
<feature type="helix" evidence="23">
    <location>
        <begin position="154"/>
        <end position="164"/>
    </location>
</feature>
<feature type="helix" evidence="23">
    <location>
        <begin position="179"/>
        <end position="191"/>
    </location>
</feature>
<feature type="helix" evidence="23">
    <location>
        <begin position="198"/>
        <end position="210"/>
    </location>
</feature>
<feature type="helix" evidence="23">
    <location>
        <begin position="213"/>
        <end position="218"/>
    </location>
</feature>
<feature type="helix" evidence="23">
    <location>
        <begin position="220"/>
        <end position="225"/>
    </location>
</feature>
<feature type="helix" evidence="23">
    <location>
        <begin position="226"/>
        <end position="236"/>
    </location>
</feature>
<feature type="helix" evidence="23">
    <location>
        <begin position="240"/>
        <end position="259"/>
    </location>
</feature>
<feature type="strand" evidence="23">
    <location>
        <begin position="260"/>
        <end position="262"/>
    </location>
</feature>
<comment type="function">
    <text evidence="3 5 7 8 9 10">Transporter of a GTP-driven Fe(2+) uptake system, probably couples GTP-binding to channel opening and Fe(2+) uptake (PubMed:12446835, PubMed:19629046). A guanine nucleotide-binding protein (G proteins) in which the guanine nucleotide binding site alternates between an active, GTP-bound state and an inactive, GDP-bound state. This protein has fast intrinsic GDP release, mediated by the G5 loop (about residues 149-158). Presumably GTP hydrolysis leads to conformational changes and channel closing (PubMed:19629046). A GDP release mechanism involving a conformational change of the G5 loop (and thus the removal of the nucleotide-binding and stabilizing interactions) would significantly reduce the affinity for GDP, and conceivably be sufficient for catalysing nucleotide release (PubMed:25374115).</text>
</comment>
<comment type="subunit">
    <text evidence="5 8 11">The isolated N-terminal domain (residues 1-274) forms trimers (PubMed:19629046, PubMed:25374115, Ref.10).</text>
</comment>
<comment type="interaction">
    <interactant intactId="EBI-7131497">
        <id>P33650</id>
    </interactant>
    <interactant intactId="EBI-7131497">
        <id>P33650</id>
        <label>feoB</label>
    </interactant>
    <organismsDiffer>false</organismsDiffer>
    <experiments>5</experiments>
</comment>
<comment type="subcellular location">
    <subcellularLocation>
        <location evidence="4">Cell inner membrane</location>
        <topology>Multi-pass membrane protein</topology>
    </subcellularLocation>
</comment>
<comment type="induction">
    <text evidence="3 6">Iron uptake is repressed by the global regulator Fur in presence of Fe(2+) (PubMed:12446835). Induced by hydroxyurea (PubMed:20005847).</text>
</comment>
<comment type="domain">
    <text evidence="3 5 7">Contains a guanine-nucleotide-specific nucleotide-binding site (about residues 1-276) that shows slow GTP hydrolysis (PubMed:12446835, PubMed:23104801). When a non-hydrolyzable GTP analog binds to the trimeric N-terminal domain, it induces a structural shift which opens a pore (PubMed:19629046).</text>
</comment>
<comment type="disruption phenotype">
    <text evidence="10">Poor uptake of Fe(2+).</text>
</comment>
<comment type="similarity">
    <text evidence="2">Belongs to the TRAFAC class TrmE-Era-EngA-EngB-Septin-like GTPase superfamily. FeoB GTPase (TC 9.A.8) family.</text>
</comment>
<dbReference type="EMBL" id="X71063">
    <property type="protein sequence ID" value="CAA50387.1"/>
    <property type="molecule type" value="Genomic_DNA"/>
</dbReference>
<dbReference type="EMBL" id="U18997">
    <property type="protein sequence ID" value="AAA58207.1"/>
    <property type="molecule type" value="Genomic_DNA"/>
</dbReference>
<dbReference type="EMBL" id="U00096">
    <property type="protein sequence ID" value="AAC76434.1"/>
    <property type="molecule type" value="Genomic_DNA"/>
</dbReference>
<dbReference type="EMBL" id="AP009048">
    <property type="protein sequence ID" value="BAE77882.1"/>
    <property type="molecule type" value="Genomic_DNA"/>
</dbReference>
<dbReference type="EMBL" id="AY625107">
    <property type="protein sequence ID" value="AAT42461.1"/>
    <property type="molecule type" value="Genomic_DNA"/>
</dbReference>
<dbReference type="PIR" id="A36932">
    <property type="entry name" value="A36932"/>
</dbReference>
<dbReference type="RefSeq" id="NP_417868.1">
    <property type="nucleotide sequence ID" value="NC_000913.3"/>
</dbReference>
<dbReference type="RefSeq" id="WP_000737039.1">
    <property type="nucleotide sequence ID" value="NZ_SSZK01000008.1"/>
</dbReference>
<dbReference type="PDB" id="3HYR">
    <property type="method" value="X-ray"/>
    <property type="resolution" value="2.20 A"/>
    <property type="chains" value="A/B/C=1-270"/>
</dbReference>
<dbReference type="PDB" id="3HYT">
    <property type="method" value="X-ray"/>
    <property type="resolution" value="2.74 A"/>
    <property type="chains" value="A/B/C=1-270"/>
</dbReference>
<dbReference type="PDB" id="3I8S">
    <property type="method" value="X-ray"/>
    <property type="resolution" value="1.80 A"/>
    <property type="chains" value="A/B/C=1-274"/>
</dbReference>
<dbReference type="PDB" id="3I8X">
    <property type="method" value="X-ray"/>
    <property type="resolution" value="2.25 A"/>
    <property type="chains" value="A/B/C=1-274"/>
</dbReference>
<dbReference type="PDB" id="3I92">
    <property type="method" value="X-ray"/>
    <property type="resolution" value="3.00 A"/>
    <property type="chains" value="A/B/C=1-274"/>
</dbReference>
<dbReference type="PDB" id="4Q00">
    <property type="method" value="X-ray"/>
    <property type="resolution" value="2.10 A"/>
    <property type="chains" value="A/B/C=1-261"/>
</dbReference>
<dbReference type="PDB" id="4Q5I">
    <property type="method" value="X-ray"/>
    <property type="resolution" value="2.80 A"/>
    <property type="chains" value="A/B/C/D/E/F=1-270"/>
</dbReference>
<dbReference type="PDB" id="4R98">
    <property type="method" value="X-ray"/>
    <property type="resolution" value="2.22 A"/>
    <property type="chains" value="A/B=1-270"/>
</dbReference>
<dbReference type="PDBsum" id="3HYR"/>
<dbReference type="PDBsum" id="3HYT"/>
<dbReference type="PDBsum" id="3I8S"/>
<dbReference type="PDBsum" id="3I8X"/>
<dbReference type="PDBsum" id="3I92"/>
<dbReference type="PDBsum" id="4Q00"/>
<dbReference type="PDBsum" id="4Q5I"/>
<dbReference type="PDBsum" id="4R98"/>
<dbReference type="SMR" id="P33650"/>
<dbReference type="BioGRID" id="4261727">
    <property type="interactions" value="49"/>
</dbReference>
<dbReference type="BioGRID" id="852228">
    <property type="interactions" value="1"/>
</dbReference>
<dbReference type="DIP" id="DIP-9591N"/>
<dbReference type="FunCoup" id="P33650">
    <property type="interactions" value="241"/>
</dbReference>
<dbReference type="MINT" id="P33650"/>
<dbReference type="STRING" id="511145.b3409"/>
<dbReference type="TCDB" id="9.A.8.1.1">
    <property type="family name" value="the ferrous iron uptake (feob) family"/>
</dbReference>
<dbReference type="jPOST" id="P33650"/>
<dbReference type="PaxDb" id="511145-b3409"/>
<dbReference type="EnsemblBacteria" id="AAC76434">
    <property type="protein sequence ID" value="AAC76434"/>
    <property type="gene ID" value="b3409"/>
</dbReference>
<dbReference type="GeneID" id="947919"/>
<dbReference type="KEGG" id="ecj:JW3372"/>
<dbReference type="KEGG" id="eco:b3409"/>
<dbReference type="KEGG" id="ecoc:C3026_18495"/>
<dbReference type="PATRIC" id="fig|1411691.4.peg.3320"/>
<dbReference type="EchoBASE" id="EB2026"/>
<dbReference type="eggNOG" id="COG0370">
    <property type="taxonomic scope" value="Bacteria"/>
</dbReference>
<dbReference type="HOGENOM" id="CLU_013350_3_0_6"/>
<dbReference type="InParanoid" id="P33650"/>
<dbReference type="OMA" id="YAFAMQC"/>
<dbReference type="OrthoDB" id="9809127at2"/>
<dbReference type="PhylomeDB" id="P33650"/>
<dbReference type="BioCyc" id="EcoCyc:FEOB-MONOMER"/>
<dbReference type="BioCyc" id="MetaCyc:FEOB-MONOMER"/>
<dbReference type="EvolutionaryTrace" id="P33650"/>
<dbReference type="PRO" id="PR:P33650"/>
<dbReference type="Proteomes" id="UP000000625">
    <property type="component" value="Chromosome"/>
</dbReference>
<dbReference type="GO" id="GO:0005886">
    <property type="term" value="C:plasma membrane"/>
    <property type="evidence" value="ECO:0000314"/>
    <property type="project" value="EcoCyc"/>
</dbReference>
<dbReference type="GO" id="GO:0015093">
    <property type="term" value="F:ferrous iron transmembrane transporter activity"/>
    <property type="evidence" value="ECO:0000314"/>
    <property type="project" value="EcoCyc"/>
</dbReference>
<dbReference type="GO" id="GO:0005525">
    <property type="term" value="F:GTP binding"/>
    <property type="evidence" value="ECO:0000315"/>
    <property type="project" value="EcoCyc"/>
</dbReference>
<dbReference type="GO" id="GO:0042802">
    <property type="term" value="F:identical protein binding"/>
    <property type="evidence" value="ECO:0000353"/>
    <property type="project" value="IntAct"/>
</dbReference>
<dbReference type="GO" id="GO:0006974">
    <property type="term" value="P:DNA damage response"/>
    <property type="evidence" value="ECO:0000270"/>
    <property type="project" value="EcoliWiki"/>
</dbReference>
<dbReference type="GO" id="GO:0098711">
    <property type="term" value="P:iron ion import across plasma membrane"/>
    <property type="evidence" value="ECO:0000314"/>
    <property type="project" value="EcoCyc"/>
</dbReference>
<dbReference type="CDD" id="cd01879">
    <property type="entry name" value="FeoB"/>
    <property type="match status" value="1"/>
</dbReference>
<dbReference type="FunFam" id="1.10.287.1770:FF:000001">
    <property type="entry name" value="Ferrous iron transport protein B"/>
    <property type="match status" value="1"/>
</dbReference>
<dbReference type="FunFam" id="3.40.50.300:FF:000426">
    <property type="entry name" value="Ferrous iron transport protein B"/>
    <property type="match status" value="1"/>
</dbReference>
<dbReference type="Gene3D" id="1.10.287.1770">
    <property type="match status" value="1"/>
</dbReference>
<dbReference type="Gene3D" id="3.40.50.300">
    <property type="entry name" value="P-loop containing nucleotide triphosphate hydrolases"/>
    <property type="match status" value="1"/>
</dbReference>
<dbReference type="InterPro" id="IPR003373">
    <property type="entry name" value="Fe2_transport_prot-B"/>
</dbReference>
<dbReference type="InterPro" id="IPR011640">
    <property type="entry name" value="Fe2_transport_prot_B_C"/>
</dbReference>
<dbReference type="InterPro" id="IPR041069">
    <property type="entry name" value="FeoB_Cyto"/>
</dbReference>
<dbReference type="InterPro" id="IPR050860">
    <property type="entry name" value="FeoB_GTPase"/>
</dbReference>
<dbReference type="InterPro" id="IPR030389">
    <property type="entry name" value="G_FEOB_dom"/>
</dbReference>
<dbReference type="InterPro" id="IPR011642">
    <property type="entry name" value="Gate_dom"/>
</dbReference>
<dbReference type="InterPro" id="IPR027417">
    <property type="entry name" value="P-loop_NTPase"/>
</dbReference>
<dbReference type="NCBIfam" id="TIGR00437">
    <property type="entry name" value="feoB"/>
    <property type="match status" value="1"/>
</dbReference>
<dbReference type="NCBIfam" id="NF007105">
    <property type="entry name" value="PRK09554.1"/>
    <property type="match status" value="1"/>
</dbReference>
<dbReference type="PANTHER" id="PTHR43185:SF1">
    <property type="entry name" value="FE(2+) TRANSPORTER FEOB"/>
    <property type="match status" value="1"/>
</dbReference>
<dbReference type="PANTHER" id="PTHR43185">
    <property type="entry name" value="FERROUS IRON TRANSPORT PROTEIN B"/>
    <property type="match status" value="1"/>
</dbReference>
<dbReference type="Pfam" id="PF07664">
    <property type="entry name" value="FeoB_C"/>
    <property type="match status" value="1"/>
</dbReference>
<dbReference type="Pfam" id="PF17910">
    <property type="entry name" value="FeoB_Cyto"/>
    <property type="match status" value="1"/>
</dbReference>
<dbReference type="Pfam" id="PF02421">
    <property type="entry name" value="FeoB_N"/>
    <property type="match status" value="1"/>
</dbReference>
<dbReference type="Pfam" id="PF07670">
    <property type="entry name" value="Gate"/>
    <property type="match status" value="2"/>
</dbReference>
<dbReference type="SUPFAM" id="SSF52540">
    <property type="entry name" value="P-loop containing nucleoside triphosphate hydrolases"/>
    <property type="match status" value="1"/>
</dbReference>
<dbReference type="PROSITE" id="PS51711">
    <property type="entry name" value="G_FEOB"/>
    <property type="match status" value="1"/>
</dbReference>
<proteinExistence type="evidence at protein level"/>
<accession>P33650</accession>
<accession>Q2M774</accession>
<accession>Q6IU42</accession>
<gene>
    <name type="primary">feoB</name>
    <name type="ordered locus">b3409</name>
    <name type="ordered locus">JW3372</name>
</gene>
<name>FEOB_ECOLI</name>